<name>RL31_SHEDO</name>
<proteinExistence type="inferred from homology"/>
<organism>
    <name type="scientific">Shewanella denitrificans (strain OS217 / ATCC BAA-1090 / DSM 15013)</name>
    <dbReference type="NCBI Taxonomy" id="318161"/>
    <lineage>
        <taxon>Bacteria</taxon>
        <taxon>Pseudomonadati</taxon>
        <taxon>Pseudomonadota</taxon>
        <taxon>Gammaproteobacteria</taxon>
        <taxon>Alteromonadales</taxon>
        <taxon>Shewanellaceae</taxon>
        <taxon>Shewanella</taxon>
    </lineage>
</organism>
<protein>
    <recommendedName>
        <fullName evidence="1">Large ribosomal subunit protein bL31</fullName>
    </recommendedName>
    <alternativeName>
        <fullName evidence="2">50S ribosomal protein L31</fullName>
    </alternativeName>
</protein>
<evidence type="ECO:0000255" key="1">
    <source>
        <dbReference type="HAMAP-Rule" id="MF_00501"/>
    </source>
</evidence>
<evidence type="ECO:0000305" key="2"/>
<accession>Q12IU6</accession>
<gene>
    <name evidence="1" type="primary">rpmE</name>
    <name type="ordered locus">Sden_3354</name>
</gene>
<comment type="function">
    <text evidence="1">Binds the 23S rRNA.</text>
</comment>
<comment type="cofactor">
    <cofactor evidence="1">
        <name>Zn(2+)</name>
        <dbReference type="ChEBI" id="CHEBI:29105"/>
    </cofactor>
    <text evidence="1">Binds 1 zinc ion per subunit.</text>
</comment>
<comment type="subunit">
    <text evidence="1">Part of the 50S ribosomal subunit.</text>
</comment>
<comment type="similarity">
    <text evidence="1">Belongs to the bacterial ribosomal protein bL31 family. Type A subfamily.</text>
</comment>
<dbReference type="EMBL" id="CP000302">
    <property type="protein sequence ID" value="ABE56630.1"/>
    <property type="molecule type" value="Genomic_DNA"/>
</dbReference>
<dbReference type="RefSeq" id="WP_011497773.1">
    <property type="nucleotide sequence ID" value="NC_007954.1"/>
</dbReference>
<dbReference type="SMR" id="Q12IU6"/>
<dbReference type="STRING" id="318161.Sden_3354"/>
<dbReference type="KEGG" id="sdn:Sden_3354"/>
<dbReference type="eggNOG" id="COG0254">
    <property type="taxonomic scope" value="Bacteria"/>
</dbReference>
<dbReference type="HOGENOM" id="CLU_114306_4_3_6"/>
<dbReference type="OrthoDB" id="9803251at2"/>
<dbReference type="Proteomes" id="UP000001982">
    <property type="component" value="Chromosome"/>
</dbReference>
<dbReference type="GO" id="GO:1990904">
    <property type="term" value="C:ribonucleoprotein complex"/>
    <property type="evidence" value="ECO:0007669"/>
    <property type="project" value="UniProtKB-KW"/>
</dbReference>
<dbReference type="GO" id="GO:0005840">
    <property type="term" value="C:ribosome"/>
    <property type="evidence" value="ECO:0007669"/>
    <property type="project" value="UniProtKB-KW"/>
</dbReference>
<dbReference type="GO" id="GO:0046872">
    <property type="term" value="F:metal ion binding"/>
    <property type="evidence" value="ECO:0007669"/>
    <property type="project" value="UniProtKB-KW"/>
</dbReference>
<dbReference type="GO" id="GO:0019843">
    <property type="term" value="F:rRNA binding"/>
    <property type="evidence" value="ECO:0007669"/>
    <property type="project" value="UniProtKB-KW"/>
</dbReference>
<dbReference type="GO" id="GO:0003735">
    <property type="term" value="F:structural constituent of ribosome"/>
    <property type="evidence" value="ECO:0007669"/>
    <property type="project" value="InterPro"/>
</dbReference>
<dbReference type="GO" id="GO:0006412">
    <property type="term" value="P:translation"/>
    <property type="evidence" value="ECO:0007669"/>
    <property type="project" value="UniProtKB-UniRule"/>
</dbReference>
<dbReference type="Gene3D" id="4.10.830.30">
    <property type="entry name" value="Ribosomal protein L31"/>
    <property type="match status" value="1"/>
</dbReference>
<dbReference type="HAMAP" id="MF_00501">
    <property type="entry name" value="Ribosomal_bL31_1"/>
    <property type="match status" value="1"/>
</dbReference>
<dbReference type="InterPro" id="IPR034704">
    <property type="entry name" value="Ribosomal_bL28/bL31-like_sf"/>
</dbReference>
<dbReference type="InterPro" id="IPR002150">
    <property type="entry name" value="Ribosomal_bL31"/>
</dbReference>
<dbReference type="InterPro" id="IPR027491">
    <property type="entry name" value="Ribosomal_bL31_A"/>
</dbReference>
<dbReference type="InterPro" id="IPR042105">
    <property type="entry name" value="Ribosomal_bL31_sf"/>
</dbReference>
<dbReference type="NCBIfam" id="TIGR00105">
    <property type="entry name" value="L31"/>
    <property type="match status" value="1"/>
</dbReference>
<dbReference type="NCBIfam" id="NF000612">
    <property type="entry name" value="PRK00019.1"/>
    <property type="match status" value="1"/>
</dbReference>
<dbReference type="NCBIfam" id="NF001809">
    <property type="entry name" value="PRK00528.1"/>
    <property type="match status" value="1"/>
</dbReference>
<dbReference type="PANTHER" id="PTHR33280">
    <property type="entry name" value="50S RIBOSOMAL PROTEIN L31, CHLOROPLASTIC"/>
    <property type="match status" value="1"/>
</dbReference>
<dbReference type="PANTHER" id="PTHR33280:SF6">
    <property type="entry name" value="LARGE RIBOSOMAL SUBUNIT PROTEIN BL31A"/>
    <property type="match status" value="1"/>
</dbReference>
<dbReference type="Pfam" id="PF01197">
    <property type="entry name" value="Ribosomal_L31"/>
    <property type="match status" value="1"/>
</dbReference>
<dbReference type="PRINTS" id="PR01249">
    <property type="entry name" value="RIBOSOMALL31"/>
</dbReference>
<dbReference type="SUPFAM" id="SSF143800">
    <property type="entry name" value="L28p-like"/>
    <property type="match status" value="1"/>
</dbReference>
<dbReference type="PROSITE" id="PS01143">
    <property type="entry name" value="RIBOSOMAL_L31"/>
    <property type="match status" value="1"/>
</dbReference>
<reference key="1">
    <citation type="submission" date="2006-03" db="EMBL/GenBank/DDBJ databases">
        <title>Complete sequence of Shewanella denitrificans OS217.</title>
        <authorList>
            <consortium name="US DOE Joint Genome Institute"/>
            <person name="Copeland A."/>
            <person name="Lucas S."/>
            <person name="Lapidus A."/>
            <person name="Barry K."/>
            <person name="Detter J.C."/>
            <person name="Glavina del Rio T."/>
            <person name="Hammon N."/>
            <person name="Israni S."/>
            <person name="Dalin E."/>
            <person name="Tice H."/>
            <person name="Pitluck S."/>
            <person name="Brettin T."/>
            <person name="Bruce D."/>
            <person name="Han C."/>
            <person name="Tapia R."/>
            <person name="Gilna P."/>
            <person name="Kiss H."/>
            <person name="Schmutz J."/>
            <person name="Larimer F."/>
            <person name="Land M."/>
            <person name="Hauser L."/>
            <person name="Kyrpides N."/>
            <person name="Lykidis A."/>
            <person name="Richardson P."/>
        </authorList>
    </citation>
    <scope>NUCLEOTIDE SEQUENCE [LARGE SCALE GENOMIC DNA]</scope>
    <source>
        <strain>OS217 / ATCC BAA-1090 / DSM 15013</strain>
    </source>
</reference>
<feature type="chain" id="PRO_1000126730" description="Large ribosomal subunit protein bL31">
    <location>
        <begin position="1"/>
        <end position="70"/>
    </location>
</feature>
<feature type="binding site" evidence="1">
    <location>
        <position position="16"/>
    </location>
    <ligand>
        <name>Zn(2+)</name>
        <dbReference type="ChEBI" id="CHEBI:29105"/>
    </ligand>
</feature>
<feature type="binding site" evidence="1">
    <location>
        <position position="18"/>
    </location>
    <ligand>
        <name>Zn(2+)</name>
        <dbReference type="ChEBI" id="CHEBI:29105"/>
    </ligand>
</feature>
<feature type="binding site" evidence="1">
    <location>
        <position position="37"/>
    </location>
    <ligand>
        <name>Zn(2+)</name>
        <dbReference type="ChEBI" id="CHEBI:29105"/>
    </ligand>
</feature>
<feature type="binding site" evidence="1">
    <location>
        <position position="40"/>
    </location>
    <ligand>
        <name>Zn(2+)</name>
        <dbReference type="ChEBI" id="CHEBI:29105"/>
    </ligand>
</feature>
<keyword id="KW-0479">Metal-binding</keyword>
<keyword id="KW-1185">Reference proteome</keyword>
<keyword id="KW-0687">Ribonucleoprotein</keyword>
<keyword id="KW-0689">Ribosomal protein</keyword>
<keyword id="KW-0694">RNA-binding</keyword>
<keyword id="KW-0699">rRNA-binding</keyword>
<keyword id="KW-0862">Zinc</keyword>
<sequence length="70" mass="7511">MKPGIHPTYAEITATCTCGNIIKVNSTAGKSLHLDVCGACHPFYTGTQKVVDTGGRIDKFNKRFGILGKK</sequence>